<comment type="function">
    <text evidence="1">Specifically methylates the guanine in position 1207 of 16S rRNA in the 30S particle.</text>
</comment>
<comment type="catalytic activity">
    <reaction evidence="1">
        <text>guanosine(1207) in 16S rRNA + S-adenosyl-L-methionine = N(2)-methylguanosine(1207) in 16S rRNA + S-adenosyl-L-homocysteine + H(+)</text>
        <dbReference type="Rhea" id="RHEA:42736"/>
        <dbReference type="Rhea" id="RHEA-COMP:10213"/>
        <dbReference type="Rhea" id="RHEA-COMP:10214"/>
        <dbReference type="ChEBI" id="CHEBI:15378"/>
        <dbReference type="ChEBI" id="CHEBI:57856"/>
        <dbReference type="ChEBI" id="CHEBI:59789"/>
        <dbReference type="ChEBI" id="CHEBI:74269"/>
        <dbReference type="ChEBI" id="CHEBI:74481"/>
        <dbReference type="EC" id="2.1.1.172"/>
    </reaction>
</comment>
<comment type="subunit">
    <text evidence="1">Monomer.</text>
</comment>
<comment type="subcellular location">
    <subcellularLocation>
        <location evidence="1">Cytoplasm</location>
    </subcellularLocation>
</comment>
<comment type="similarity">
    <text evidence="1">Belongs to the methyltransferase superfamily. RsmC family.</text>
</comment>
<feature type="chain" id="PRO_0000369787" description="Ribosomal RNA small subunit methyltransferase C">
    <location>
        <begin position="1"/>
        <end position="343"/>
    </location>
</feature>
<dbReference type="EC" id="2.1.1.172" evidence="1"/>
<dbReference type="EMBL" id="AE005674">
    <property type="protein sequence ID" value="AAN45817.1"/>
    <property type="molecule type" value="Genomic_DNA"/>
</dbReference>
<dbReference type="EMBL" id="AE014073">
    <property type="protein sequence ID" value="AAP19592.1"/>
    <property type="molecule type" value="Genomic_DNA"/>
</dbReference>
<dbReference type="RefSeq" id="NP_710110.1">
    <property type="nucleotide sequence ID" value="NC_004337.2"/>
</dbReference>
<dbReference type="RefSeq" id="WP_001272299.1">
    <property type="nucleotide sequence ID" value="NZ_WPGW01000013.1"/>
</dbReference>
<dbReference type="SMR" id="Q820Z6"/>
<dbReference type="STRING" id="198214.SF4402"/>
<dbReference type="PaxDb" id="198214-SF4402"/>
<dbReference type="GeneID" id="1023943"/>
<dbReference type="KEGG" id="sfl:SF4402"/>
<dbReference type="KEGG" id="sfx:S4674"/>
<dbReference type="PATRIC" id="fig|198214.7.peg.5189"/>
<dbReference type="HOGENOM" id="CLU_049581_0_1_6"/>
<dbReference type="Proteomes" id="UP000001006">
    <property type="component" value="Chromosome"/>
</dbReference>
<dbReference type="Proteomes" id="UP000002673">
    <property type="component" value="Chromosome"/>
</dbReference>
<dbReference type="GO" id="GO:0005737">
    <property type="term" value="C:cytoplasm"/>
    <property type="evidence" value="ECO:0007669"/>
    <property type="project" value="UniProtKB-SubCell"/>
</dbReference>
<dbReference type="GO" id="GO:0052914">
    <property type="term" value="F:16S rRNA (guanine(1207)-N(2))-methyltransferase activity"/>
    <property type="evidence" value="ECO:0007669"/>
    <property type="project" value="UniProtKB-EC"/>
</dbReference>
<dbReference type="GO" id="GO:0003676">
    <property type="term" value="F:nucleic acid binding"/>
    <property type="evidence" value="ECO:0007669"/>
    <property type="project" value="InterPro"/>
</dbReference>
<dbReference type="CDD" id="cd02440">
    <property type="entry name" value="AdoMet_MTases"/>
    <property type="match status" value="1"/>
</dbReference>
<dbReference type="FunFam" id="3.40.50.150:FF:000058">
    <property type="entry name" value="Ribosomal RNA small subunit methyltransferase C"/>
    <property type="match status" value="1"/>
</dbReference>
<dbReference type="FunFam" id="3.40.50.150:FF:000063">
    <property type="entry name" value="Ribosomal RNA small subunit methyltransferase C"/>
    <property type="match status" value="1"/>
</dbReference>
<dbReference type="Gene3D" id="3.40.50.150">
    <property type="entry name" value="Vaccinia Virus protein VP39"/>
    <property type="match status" value="2"/>
</dbReference>
<dbReference type="HAMAP" id="MF_01862">
    <property type="entry name" value="16SrRNA_methyltr_C"/>
    <property type="match status" value="1"/>
</dbReference>
<dbReference type="InterPro" id="IPR002052">
    <property type="entry name" value="DNA_methylase_N6_adenine_CS"/>
</dbReference>
<dbReference type="InterPro" id="IPR013675">
    <property type="entry name" value="Mtase_sm_N"/>
</dbReference>
<dbReference type="InterPro" id="IPR023543">
    <property type="entry name" value="rRNA_ssu_MeTfrase_C"/>
</dbReference>
<dbReference type="InterPro" id="IPR046977">
    <property type="entry name" value="RsmC/RlmG"/>
</dbReference>
<dbReference type="InterPro" id="IPR029063">
    <property type="entry name" value="SAM-dependent_MTases_sf"/>
</dbReference>
<dbReference type="InterPro" id="IPR007848">
    <property type="entry name" value="Small_mtfrase_dom"/>
</dbReference>
<dbReference type="NCBIfam" id="NF007023">
    <property type="entry name" value="PRK09489.1"/>
    <property type="match status" value="1"/>
</dbReference>
<dbReference type="PANTHER" id="PTHR47816">
    <property type="entry name" value="RIBOSOMAL RNA SMALL SUBUNIT METHYLTRANSFERASE C"/>
    <property type="match status" value="1"/>
</dbReference>
<dbReference type="PANTHER" id="PTHR47816:SF4">
    <property type="entry name" value="RIBOSOMAL RNA SMALL SUBUNIT METHYLTRANSFERASE C"/>
    <property type="match status" value="1"/>
</dbReference>
<dbReference type="Pfam" id="PF05175">
    <property type="entry name" value="MTS"/>
    <property type="match status" value="1"/>
</dbReference>
<dbReference type="Pfam" id="PF08468">
    <property type="entry name" value="MTS_N"/>
    <property type="match status" value="1"/>
</dbReference>
<dbReference type="SUPFAM" id="SSF53335">
    <property type="entry name" value="S-adenosyl-L-methionine-dependent methyltransferases"/>
    <property type="match status" value="1"/>
</dbReference>
<organism>
    <name type="scientific">Shigella flexneri</name>
    <dbReference type="NCBI Taxonomy" id="623"/>
    <lineage>
        <taxon>Bacteria</taxon>
        <taxon>Pseudomonadati</taxon>
        <taxon>Pseudomonadota</taxon>
        <taxon>Gammaproteobacteria</taxon>
        <taxon>Enterobacterales</taxon>
        <taxon>Enterobacteriaceae</taxon>
        <taxon>Shigella</taxon>
    </lineage>
</organism>
<gene>
    <name evidence="1" type="primary">rsmC</name>
    <name type="ordered locus">SF4402</name>
    <name type="ordered locus">S4674</name>
</gene>
<proteinExistence type="inferred from homology"/>
<evidence type="ECO:0000255" key="1">
    <source>
        <dbReference type="HAMAP-Rule" id="MF_01862"/>
    </source>
</evidence>
<sequence length="343" mass="37504">MSAFTPASEVLLRHSDDFEQSRILFAGDLQDDLPARLDTAASRAHTQQFHHWQVLSCQMGDNARFSLVATANDVADCDTLIYYWPKNKPEAQFQLMNLLSLLPVGTDIFVVGENRSGVRSAEQMLADYAPLNKVDSARRCGLYFGRLEKQPVFDADKFWGEYSVDGLTVKTLPGVFSRDGLDVGSQLLLSTLTPHTKGKVLDVGCGAGVLSVAFARHSPKIRLTLCDVSAPAVEASRATLAANGVEGEVFASNVFSEVKGCFDMIISNPPFHDGMQTSLDAAQTLIRGAVRHLNSGGELRIVANAFLPYPDVLDETFGFHEVIAQTGRFKVYRAIMTRQAKKG</sequence>
<protein>
    <recommendedName>
        <fullName evidence="1">Ribosomal RNA small subunit methyltransferase C</fullName>
        <ecNumber evidence="1">2.1.1.172</ecNumber>
    </recommendedName>
    <alternativeName>
        <fullName evidence="1">16S rRNA m2G1207 methyltransferase</fullName>
    </alternativeName>
    <alternativeName>
        <fullName evidence="1">rRNA (guanine-N(2)-)-methyltransferase RsmC</fullName>
    </alternativeName>
</protein>
<name>RSMC_SHIFL</name>
<reference key="1">
    <citation type="journal article" date="2002" name="Nucleic Acids Res.">
        <title>Genome sequence of Shigella flexneri 2a: insights into pathogenicity through comparison with genomes of Escherichia coli K12 and O157.</title>
        <authorList>
            <person name="Jin Q."/>
            <person name="Yuan Z."/>
            <person name="Xu J."/>
            <person name="Wang Y."/>
            <person name="Shen Y."/>
            <person name="Lu W."/>
            <person name="Wang J."/>
            <person name="Liu H."/>
            <person name="Yang J."/>
            <person name="Yang F."/>
            <person name="Zhang X."/>
            <person name="Zhang J."/>
            <person name="Yang G."/>
            <person name="Wu H."/>
            <person name="Qu D."/>
            <person name="Dong J."/>
            <person name="Sun L."/>
            <person name="Xue Y."/>
            <person name="Zhao A."/>
            <person name="Gao Y."/>
            <person name="Zhu J."/>
            <person name="Kan B."/>
            <person name="Ding K."/>
            <person name="Chen S."/>
            <person name="Cheng H."/>
            <person name="Yao Z."/>
            <person name="He B."/>
            <person name="Chen R."/>
            <person name="Ma D."/>
            <person name="Qiang B."/>
            <person name="Wen Y."/>
            <person name="Hou Y."/>
            <person name="Yu J."/>
        </authorList>
    </citation>
    <scope>NUCLEOTIDE SEQUENCE [LARGE SCALE GENOMIC DNA]</scope>
    <source>
        <strain>301 / Serotype 2a</strain>
    </source>
</reference>
<reference key="2">
    <citation type="journal article" date="2003" name="Infect. Immun.">
        <title>Complete genome sequence and comparative genomics of Shigella flexneri serotype 2a strain 2457T.</title>
        <authorList>
            <person name="Wei J."/>
            <person name="Goldberg M.B."/>
            <person name="Burland V."/>
            <person name="Venkatesan M.M."/>
            <person name="Deng W."/>
            <person name="Fournier G."/>
            <person name="Mayhew G.F."/>
            <person name="Plunkett G. III"/>
            <person name="Rose D.J."/>
            <person name="Darling A."/>
            <person name="Mau B."/>
            <person name="Perna N.T."/>
            <person name="Payne S.M."/>
            <person name="Runyen-Janecky L.J."/>
            <person name="Zhou S."/>
            <person name="Schwartz D.C."/>
            <person name="Blattner F.R."/>
        </authorList>
    </citation>
    <scope>NUCLEOTIDE SEQUENCE [LARGE SCALE GENOMIC DNA]</scope>
    <source>
        <strain>ATCC 700930 / 2457T / Serotype 2a</strain>
    </source>
</reference>
<accession>Q820Z6</accession>
<accession>Q7BYG4</accession>
<keyword id="KW-0963">Cytoplasm</keyword>
<keyword id="KW-0489">Methyltransferase</keyword>
<keyword id="KW-1185">Reference proteome</keyword>
<keyword id="KW-0698">rRNA processing</keyword>
<keyword id="KW-0949">S-adenosyl-L-methionine</keyword>
<keyword id="KW-0808">Transferase</keyword>